<feature type="chain" id="PRO_0000122981" description="dTTP/UTP pyrophosphatase">
    <location>
        <begin position="1"/>
        <end position="197"/>
    </location>
</feature>
<feature type="active site" description="Proton acceptor" evidence="1 10">
    <location>
        <position position="70"/>
    </location>
</feature>
<feature type="site" description="Important for substrate specificity" evidence="1 10">
    <location>
        <position position="12"/>
    </location>
</feature>
<feature type="site" description="Important for substrate specificity" evidence="1 10">
    <location>
        <position position="71"/>
    </location>
</feature>
<feature type="site" description="Important for substrate specificity" evidence="1 10">
    <location>
        <position position="153"/>
    </location>
</feature>
<feature type="mutagenesis site" description="Loss of activity." evidence="2">
    <original>S</original>
    <variation>A</variation>
    <location>
        <position position="8"/>
    </location>
</feature>
<feature type="mutagenesis site" description="Decrease in activity." evidence="2">
    <original>S</original>
    <variation>A</variation>
    <location>
        <position position="10"/>
    </location>
</feature>
<feature type="mutagenesis site" description="Slight decrease in activity." evidence="2">
    <original>R</original>
    <variation>A</variation>
    <location>
        <position position="12"/>
    </location>
</feature>
<feature type="mutagenesis site" description="Loss of activity." evidence="2">
    <original>R</original>
    <variation>A</variation>
    <location>
        <position position="13"/>
    </location>
</feature>
<feature type="mutagenesis site" description="Loss of activity." evidence="2">
    <original>E</original>
    <variation>A</variation>
    <location>
        <position position="32"/>
    </location>
</feature>
<feature type="mutagenesis site" description="Loss of activity. Has weak pyrophosphatase activity when assayed using PPi fluorescence sensor." evidence="2 5">
    <original>E</original>
    <variation>A</variation>
    <location>
        <position position="33"/>
    </location>
</feature>
<feature type="mutagenesis site" description="Loss of activity." evidence="2">
    <original>K</original>
    <variation>A</variation>
    <location>
        <position position="52"/>
    </location>
</feature>
<feature type="mutagenesis site" description="Loss of activity." evidence="2">
    <original>D</original>
    <variation>A</variation>
    <location>
        <position position="70"/>
    </location>
</feature>
<feature type="mutagenesis site" description="Strong decrease in activity." evidence="2">
    <original>E</original>
    <variation>A</variation>
    <location>
        <position position="81"/>
    </location>
</feature>
<feature type="mutagenesis site" description="Strong decrease in activity." evidence="2">
    <original>K</original>
    <variation>A</variation>
    <location>
        <position position="82"/>
    </location>
</feature>
<feature type="mutagenesis site" description="Loss of activity." evidence="2">
    <original>Y</original>
    <variation>A</variation>
    <location>
        <position position="150"/>
    </location>
</feature>
<feature type="mutagenesis site" description="Strong decrease in activity." evidence="2">
    <original>Q</original>
    <variation>A</variation>
    <location>
        <position position="153"/>
    </location>
</feature>
<feature type="mutagenesis site" description="Loss of activity." evidence="2">
    <original>Q</original>
    <variation>E</variation>
    <location>
        <position position="153"/>
    </location>
</feature>
<feature type="strand" evidence="12">
    <location>
        <begin position="4"/>
        <end position="6"/>
    </location>
</feature>
<feature type="helix" evidence="12">
    <location>
        <begin position="11"/>
        <end position="19"/>
    </location>
</feature>
<feature type="strand" evidence="12">
    <location>
        <begin position="24"/>
        <end position="26"/>
    </location>
</feature>
<feature type="helix" evidence="12">
    <location>
        <begin position="41"/>
        <end position="58"/>
    </location>
</feature>
<feature type="strand" evidence="12">
    <location>
        <begin position="66"/>
        <end position="75"/>
    </location>
</feature>
<feature type="strand" evidence="12">
    <location>
        <begin position="78"/>
        <end position="80"/>
    </location>
</feature>
<feature type="helix" evidence="12">
    <location>
        <begin position="86"/>
        <end position="96"/>
    </location>
</feature>
<feature type="strand" evidence="12">
    <location>
        <begin position="100"/>
        <end position="110"/>
    </location>
</feature>
<feature type="strand" evidence="12">
    <location>
        <begin position="115"/>
        <end position="126"/>
    </location>
</feature>
<feature type="helix" evidence="12">
    <location>
        <begin position="131"/>
        <end position="138"/>
    </location>
</feature>
<feature type="helix" evidence="12">
    <location>
        <begin position="142"/>
        <end position="145"/>
    </location>
</feature>
<feature type="helix" evidence="12">
    <location>
        <begin position="147"/>
        <end position="149"/>
    </location>
</feature>
<feature type="strand" evidence="12">
    <location>
        <begin position="152"/>
        <end position="154"/>
    </location>
</feature>
<feature type="helix" evidence="12">
    <location>
        <begin position="155"/>
        <end position="159"/>
    </location>
</feature>
<feature type="strand" evidence="12">
    <location>
        <begin position="160"/>
        <end position="165"/>
    </location>
</feature>
<feature type="helix" evidence="12">
    <location>
        <begin position="167"/>
        <end position="171"/>
    </location>
</feature>
<feature type="helix" evidence="12">
    <location>
        <begin position="175"/>
        <end position="188"/>
    </location>
</feature>
<dbReference type="EC" id="3.6.1.9" evidence="1 2 3 5"/>
<dbReference type="EMBL" id="X57166">
    <property type="protein sequence ID" value="CAA40456.1"/>
    <property type="molecule type" value="Genomic_DNA"/>
</dbReference>
<dbReference type="EMBL" id="U18997">
    <property type="protein sequence ID" value="AAA58051.1"/>
    <property type="status" value="ALT_INIT"/>
    <property type="molecule type" value="Genomic_DNA"/>
</dbReference>
<dbReference type="EMBL" id="U00096">
    <property type="protein sequence ID" value="AAC76280.1"/>
    <property type="molecule type" value="Genomic_DNA"/>
</dbReference>
<dbReference type="EMBL" id="AP009048">
    <property type="protein sequence ID" value="BAE77290.1"/>
    <property type="molecule type" value="Genomic_DNA"/>
</dbReference>
<dbReference type="PIR" id="JQ1271">
    <property type="entry name" value="JQ1271"/>
</dbReference>
<dbReference type="RefSeq" id="NP_417714.1">
    <property type="nucleotide sequence ID" value="NC_000913.3"/>
</dbReference>
<dbReference type="RefSeq" id="WP_000203105.1">
    <property type="nucleotide sequence ID" value="NZ_SSZK01000034.1"/>
</dbReference>
<dbReference type="PDB" id="4P0E">
    <property type="method" value="X-ray"/>
    <property type="resolution" value="2.30 A"/>
    <property type="chains" value="A/B=2-190"/>
</dbReference>
<dbReference type="PDBsum" id="4P0E"/>
<dbReference type="SMR" id="P25536"/>
<dbReference type="BioGRID" id="4262448">
    <property type="interactions" value="150"/>
</dbReference>
<dbReference type="BioGRID" id="852065">
    <property type="interactions" value="1"/>
</dbReference>
<dbReference type="FunCoup" id="P25536">
    <property type="interactions" value="492"/>
</dbReference>
<dbReference type="IntAct" id="P25536">
    <property type="interactions" value="4"/>
</dbReference>
<dbReference type="STRING" id="511145.b3248"/>
<dbReference type="jPOST" id="P25536"/>
<dbReference type="PaxDb" id="511145-b3248"/>
<dbReference type="EnsemblBacteria" id="AAC76280">
    <property type="protein sequence ID" value="AAC76280"/>
    <property type="gene ID" value="b3248"/>
</dbReference>
<dbReference type="GeneID" id="947753"/>
<dbReference type="KEGG" id="ecj:JW3217"/>
<dbReference type="KEGG" id="eco:b3248"/>
<dbReference type="KEGG" id="ecoc:C3026_17660"/>
<dbReference type="PATRIC" id="fig|1411691.4.peg.3481"/>
<dbReference type="EchoBASE" id="EB1275"/>
<dbReference type="eggNOG" id="COG0424">
    <property type="taxonomic scope" value="Bacteria"/>
</dbReference>
<dbReference type="HOGENOM" id="CLU_040416_2_1_6"/>
<dbReference type="InParanoid" id="P25536"/>
<dbReference type="OMA" id="VIGCDSV"/>
<dbReference type="OrthoDB" id="9807767at2"/>
<dbReference type="PhylomeDB" id="P25536"/>
<dbReference type="BioCyc" id="EcoCyc:EG11298-MONOMER"/>
<dbReference type="BioCyc" id="MetaCyc:EG11298-MONOMER"/>
<dbReference type="BRENDA" id="3.6.1.9">
    <property type="organism ID" value="2026"/>
</dbReference>
<dbReference type="EvolutionaryTrace" id="P25536"/>
<dbReference type="PRO" id="PR:P25536"/>
<dbReference type="Proteomes" id="UP000000625">
    <property type="component" value="Chromosome"/>
</dbReference>
<dbReference type="GO" id="GO:0005737">
    <property type="term" value="C:cytoplasm"/>
    <property type="evidence" value="ECO:0007669"/>
    <property type="project" value="UniProtKB-SubCell"/>
</dbReference>
<dbReference type="GO" id="GO:0036218">
    <property type="term" value="F:dTTP diphosphatase activity"/>
    <property type="evidence" value="ECO:0000314"/>
    <property type="project" value="EcoCyc"/>
</dbReference>
<dbReference type="GO" id="GO:0042802">
    <property type="term" value="F:identical protein binding"/>
    <property type="evidence" value="ECO:0000314"/>
    <property type="project" value="EcoCyc"/>
</dbReference>
<dbReference type="GO" id="GO:0030145">
    <property type="term" value="F:manganese ion binding"/>
    <property type="evidence" value="ECO:0000314"/>
    <property type="project" value="EcoCyc"/>
</dbReference>
<dbReference type="GO" id="GO:0047429">
    <property type="term" value="F:nucleoside triphosphate diphosphatase activity"/>
    <property type="evidence" value="ECO:0000314"/>
    <property type="project" value="EcoliWiki"/>
</dbReference>
<dbReference type="GO" id="GO:0042803">
    <property type="term" value="F:protein homodimerization activity"/>
    <property type="evidence" value="ECO:0000314"/>
    <property type="project" value="EcoCyc"/>
</dbReference>
<dbReference type="GO" id="GO:0036221">
    <property type="term" value="F:UTP diphosphatase activity"/>
    <property type="evidence" value="ECO:0000314"/>
    <property type="project" value="EcoCyc"/>
</dbReference>
<dbReference type="GO" id="GO:0009117">
    <property type="term" value="P:nucleotide metabolic process"/>
    <property type="evidence" value="ECO:0007669"/>
    <property type="project" value="UniProtKB-KW"/>
</dbReference>
<dbReference type="CDD" id="cd00555">
    <property type="entry name" value="Maf"/>
    <property type="match status" value="1"/>
</dbReference>
<dbReference type="FunFam" id="3.90.950.10:FF:000004">
    <property type="entry name" value="dTTP/UTP pyrophosphatase"/>
    <property type="match status" value="1"/>
</dbReference>
<dbReference type="Gene3D" id="3.90.950.10">
    <property type="match status" value="1"/>
</dbReference>
<dbReference type="HAMAP" id="MF_00528">
    <property type="entry name" value="Maf"/>
    <property type="match status" value="1"/>
</dbReference>
<dbReference type="InterPro" id="IPR029001">
    <property type="entry name" value="ITPase-like_fam"/>
</dbReference>
<dbReference type="InterPro" id="IPR003697">
    <property type="entry name" value="Maf-like"/>
</dbReference>
<dbReference type="NCBIfam" id="TIGR00172">
    <property type="entry name" value="maf"/>
    <property type="match status" value="1"/>
</dbReference>
<dbReference type="PANTHER" id="PTHR43213">
    <property type="entry name" value="BIFUNCTIONAL DTTP/UTP PYROPHOSPHATASE/METHYLTRANSFERASE PROTEIN-RELATED"/>
    <property type="match status" value="1"/>
</dbReference>
<dbReference type="PANTHER" id="PTHR43213:SF5">
    <property type="entry name" value="BIFUNCTIONAL DTTP_UTP PYROPHOSPHATASE_METHYLTRANSFERASE PROTEIN-RELATED"/>
    <property type="match status" value="1"/>
</dbReference>
<dbReference type="Pfam" id="PF02545">
    <property type="entry name" value="Maf"/>
    <property type="match status" value="1"/>
</dbReference>
<dbReference type="PIRSF" id="PIRSF006305">
    <property type="entry name" value="Maf"/>
    <property type="match status" value="1"/>
</dbReference>
<dbReference type="SUPFAM" id="SSF52972">
    <property type="entry name" value="ITPase-like"/>
    <property type="match status" value="1"/>
</dbReference>
<proteinExistence type="evidence at protein level"/>
<protein>
    <recommendedName>
        <fullName evidence="1 9">dTTP/UTP pyrophosphatase</fullName>
        <shortName evidence="1 8">dTTPase/UTPase</shortName>
        <ecNumber evidence="1 2 3 5">3.6.1.9</ecNumber>
    </recommendedName>
    <alternativeName>
        <fullName evidence="1 6">Nucleoside triphosphate pyrophosphatase</fullName>
    </alternativeName>
    <alternativeName>
        <fullName evidence="1 6">Nucleotide pyrophosphatase</fullName>
        <shortName evidence="1 7">Nucleotide PPase</shortName>
    </alternativeName>
</protein>
<accession>P25536</accession>
<accession>Q2M8W6</accession>
<gene>
    <name type="primary">yhdE</name>
    <name type="ordered locus">b3248</name>
    <name type="ordered locus">JW3217</name>
</gene>
<sequence length="197" mass="21515">MTSLYLASGSPRRQELLAQLGVTFERIVTGIEEQRQPQESAQQYVVRLAREKARAGVAQTAKDLPVLGADTIVILNGEVLEKPRDAEHAAQMLRKLSGQTHQVMTAVALADSQHILDCLVVTDVTFRTLTDEDIAGYVASDEPLDKAGAYGIQGLGGCFVRKINGSYHAVVGLPLVETYELLSNFNALREKRDKHDG</sequence>
<comment type="function">
    <text evidence="2 3 5">Nucleoside triphosphate pyrophosphatase that hydrolyzes dTTP and UTP (PubMed:24210219, PubMed:25658941, PubMed:28811554). Can also hydrolyze TTP and the modified nucleotides 5-methyl-UTP (m(5)UTP), pseudo-UTP and 5-methyl-CTP (m(5)CTP). Has weak activity with CTP (PubMed:24210219, PubMed:25658941). May have a dual role in cell division arrest and in preventing the incorporation of modified nucleotides into cellular nucleic acids (PubMed:24210219, PubMed:25658941). Important in maintenance of cell shape (PubMed:25658941).</text>
</comment>
<comment type="catalytic activity">
    <reaction evidence="1 2 3 5">
        <text>dTTP + H2O = dTMP + diphosphate + H(+)</text>
        <dbReference type="Rhea" id="RHEA:28534"/>
        <dbReference type="ChEBI" id="CHEBI:15377"/>
        <dbReference type="ChEBI" id="CHEBI:15378"/>
        <dbReference type="ChEBI" id="CHEBI:33019"/>
        <dbReference type="ChEBI" id="CHEBI:37568"/>
        <dbReference type="ChEBI" id="CHEBI:63528"/>
        <dbReference type="EC" id="3.6.1.9"/>
    </reaction>
</comment>
<comment type="catalytic activity">
    <reaction evidence="1 2 3 5">
        <text>UTP + H2O = UMP + diphosphate + H(+)</text>
        <dbReference type="Rhea" id="RHEA:29395"/>
        <dbReference type="ChEBI" id="CHEBI:15377"/>
        <dbReference type="ChEBI" id="CHEBI:15378"/>
        <dbReference type="ChEBI" id="CHEBI:33019"/>
        <dbReference type="ChEBI" id="CHEBI:46398"/>
        <dbReference type="ChEBI" id="CHEBI:57865"/>
        <dbReference type="EC" id="3.6.1.9"/>
    </reaction>
</comment>
<comment type="catalytic activity">
    <reaction evidence="2">
        <text>5-methyl-UTP + H2O = 5-methyl-UMP + diphosphate + H(+)</text>
        <dbReference type="Rhea" id="RHEA:58736"/>
        <dbReference type="ChEBI" id="CHEBI:15377"/>
        <dbReference type="ChEBI" id="CHEBI:15378"/>
        <dbReference type="ChEBI" id="CHEBI:33019"/>
        <dbReference type="ChEBI" id="CHEBI:63527"/>
        <dbReference type="ChEBI" id="CHEBI:142797"/>
    </reaction>
</comment>
<comment type="catalytic activity">
    <reaction evidence="2">
        <text>psi-UTP + H2O = psi-UMP + diphosphate + H(+)</text>
        <dbReference type="Rhea" id="RHEA:58740"/>
        <dbReference type="ChEBI" id="CHEBI:15377"/>
        <dbReference type="ChEBI" id="CHEBI:15378"/>
        <dbReference type="ChEBI" id="CHEBI:33019"/>
        <dbReference type="ChEBI" id="CHEBI:58380"/>
        <dbReference type="ChEBI" id="CHEBI:142798"/>
    </reaction>
</comment>
<comment type="catalytic activity">
    <reaction evidence="2">
        <text>5-methyl-CTP + H2O = 5-methyl-CMP + diphosphate + H(+)</text>
        <dbReference type="Rhea" id="RHEA:58732"/>
        <dbReference type="ChEBI" id="CHEBI:15377"/>
        <dbReference type="ChEBI" id="CHEBI:15378"/>
        <dbReference type="ChEBI" id="CHEBI:33019"/>
        <dbReference type="ChEBI" id="CHEBI:142795"/>
        <dbReference type="ChEBI" id="CHEBI:142796"/>
    </reaction>
</comment>
<comment type="cofactor">
    <cofactor evidence="1 2">
        <name>a divalent metal cation</name>
        <dbReference type="ChEBI" id="CHEBI:60240"/>
    </cofactor>
</comment>
<comment type="biophysicochemical properties">
    <kinetics>
        <KM evidence="2">53 uM for dTTP</KM>
        <KM evidence="3">0.09 mM for dTTP</KM>
        <KM evidence="2">69.1 uM for UTP</KM>
        <KM evidence="3">0.5 mM for UTP</KM>
        <KM evidence="2">105.9 uM for CTP</KM>
        <KM evidence="2">32 uM for m(5)UTP</KM>
        <KM evidence="2">44.8 uM for m(5)CTP</KM>
        <KM evidence="2">47.2 uM for pseudo-UTP</KM>
        <text evidence="2 3">kcat is 15.4 sec(-1) with dTTP as substrate. kcat is 15.2 sec(-1) with UTP as substrate. kcat is 4.9 sec(-1) with CTP as substrate. kcat is 18.2 sec(-1) with m(5)UTP as substrate. kcat is 9.2 sec(-1) with m(5)CTP as substrate. kcat is 10.5 sec(-1) with pseudo-UTP as substrate (PubMed:24210219). kcat is 43 sec(-1) with dTTP as substrate. kcat is 95 sec(-1) with UTP as substrate (PubMed:25658941).</text>
    </kinetics>
</comment>
<comment type="subunit">
    <text evidence="2 3 4">Homodimer (PubMed:24210219, PubMed:25658941, PubMed:26252214). Can also form homotetramers (PubMed:24210219).</text>
</comment>
<comment type="subcellular location">
    <subcellularLocation>
        <location evidence="1 9">Cytoplasm</location>
    </subcellularLocation>
</comment>
<comment type="disruption phenotype">
    <text evidence="3">Knockout mutant grows faster than the wild-type and exhibits a more spherical shape.</text>
</comment>
<comment type="similarity">
    <text evidence="1 10">Belongs to the Maf family. YhdE subfamily.</text>
</comment>
<comment type="sequence caution" evidence="9">
    <conflict type="erroneous initiation">
        <sequence resource="EMBL-CDS" id="AAA58051"/>
    </conflict>
</comment>
<evidence type="ECO:0000255" key="1">
    <source>
        <dbReference type="HAMAP-Rule" id="MF_00528"/>
    </source>
</evidence>
<evidence type="ECO:0000269" key="2">
    <source>
    </source>
</evidence>
<evidence type="ECO:0000269" key="3">
    <source>
    </source>
</evidence>
<evidence type="ECO:0000269" key="4">
    <source>
    </source>
</evidence>
<evidence type="ECO:0000269" key="5">
    <source>
    </source>
</evidence>
<evidence type="ECO:0000303" key="6">
    <source>
    </source>
</evidence>
<evidence type="ECO:0000303" key="7">
    <source>
    </source>
</evidence>
<evidence type="ECO:0000303" key="8">
    <source>
    </source>
</evidence>
<evidence type="ECO:0000305" key="9"/>
<evidence type="ECO:0000305" key="10">
    <source>
    </source>
</evidence>
<evidence type="ECO:0007744" key="11">
    <source>
        <dbReference type="PDB" id="4P0E"/>
    </source>
</evidence>
<evidence type="ECO:0007829" key="12">
    <source>
        <dbReference type="PDB" id="4P0E"/>
    </source>
</evidence>
<reference key="1">
    <citation type="journal article" date="1991" name="Gene">
        <title>Sequence of the downstream flanking region of the shape-determining genes mreBCD of Escherichia coli.</title>
        <authorList>
            <person name="Wachi M."/>
            <person name="Doi M."/>
            <person name="Ueda T."/>
            <person name="Ueki M."/>
            <person name="Tsuritani K."/>
            <person name="Nagai K."/>
            <person name="Matsuhashi M."/>
        </authorList>
    </citation>
    <scope>NUCLEOTIDE SEQUENCE [GENOMIC DNA]</scope>
    <source>
        <strain>K12</strain>
    </source>
</reference>
<reference key="2">
    <citation type="journal article" date="1997" name="Science">
        <title>The complete genome sequence of Escherichia coli K-12.</title>
        <authorList>
            <person name="Blattner F.R."/>
            <person name="Plunkett G. III"/>
            <person name="Bloch C.A."/>
            <person name="Perna N.T."/>
            <person name="Burland V."/>
            <person name="Riley M."/>
            <person name="Collado-Vides J."/>
            <person name="Glasner J.D."/>
            <person name="Rode C.K."/>
            <person name="Mayhew G.F."/>
            <person name="Gregor J."/>
            <person name="Davis N.W."/>
            <person name="Kirkpatrick H.A."/>
            <person name="Goeden M.A."/>
            <person name="Rose D.J."/>
            <person name="Mau B."/>
            <person name="Shao Y."/>
        </authorList>
    </citation>
    <scope>NUCLEOTIDE SEQUENCE [LARGE SCALE GENOMIC DNA]</scope>
    <source>
        <strain>K12 / MG1655 / ATCC 47076</strain>
    </source>
</reference>
<reference key="3">
    <citation type="journal article" date="2006" name="Mol. Syst. Biol.">
        <title>Highly accurate genome sequences of Escherichia coli K-12 strains MG1655 and W3110.</title>
        <authorList>
            <person name="Hayashi K."/>
            <person name="Morooka N."/>
            <person name="Yamamoto Y."/>
            <person name="Fujita K."/>
            <person name="Isono K."/>
            <person name="Choi S."/>
            <person name="Ohtsubo E."/>
            <person name="Baba T."/>
            <person name="Wanner B.L."/>
            <person name="Mori H."/>
            <person name="Horiuchi T."/>
        </authorList>
    </citation>
    <scope>NUCLEOTIDE SEQUENCE [LARGE SCALE GENOMIC DNA]</scope>
    <source>
        <strain>K12 / W3110 / ATCC 27325 / DSM 5911</strain>
    </source>
</reference>
<reference key="4">
    <citation type="journal article" date="1999" name="Electrophoresis">
        <title>Enrichment of low abundance proteins of Escherichia coli by hydroxyapatite chromatography.</title>
        <authorList>
            <person name="Fountoulakis M."/>
            <person name="Takacs M.-F."/>
            <person name="Berndt P."/>
            <person name="Langen H."/>
            <person name="Takacs B."/>
        </authorList>
    </citation>
    <scope>IDENTIFICATION BY MASS SPECTROMETRY</scope>
    <source>
        <strain>B / BL21</strain>
    </source>
</reference>
<reference key="5">
    <citation type="journal article" date="2013" name="Chem. Biol.">
        <title>Biochemical and structural studies of conserved Maf proteins revealed nucleotide pyrophosphatases with a preference for modified nucleotides.</title>
        <authorList>
            <person name="Tchigvintsev A."/>
            <person name="Tchigvintsev D."/>
            <person name="Flick R."/>
            <person name="Popovic A."/>
            <person name="Dong A."/>
            <person name="Xu X."/>
            <person name="Brown G."/>
            <person name="Lu W."/>
            <person name="Wu H."/>
            <person name="Cui H."/>
            <person name="Dombrowski L."/>
            <person name="Joo J.C."/>
            <person name="Beloglazova N."/>
            <person name="Min J."/>
            <person name="Savchenko A."/>
            <person name="Caudy A.A."/>
            <person name="Rabinowitz J.D."/>
            <person name="Murzin A.G."/>
            <person name="Yakunin A.F."/>
        </authorList>
    </citation>
    <scope>FUNCTION</scope>
    <scope>CATALYTIC ACTIVITY</scope>
    <scope>COFACTOR</scope>
    <scope>BIOPHYSICOCHEMICAL PROPERTIES</scope>
    <scope>SUBUNIT</scope>
    <scope>ACTIVE SITE</scope>
    <scope>MUTAGENESIS OF SER-8; SER-10; ARG-12; ARG-13; GLU-32; GLU-33; LYS-52; ASP-70; GLU-81; LYS-82; TYR-150 AND GLN-153</scope>
</reference>
<reference key="6">
    <citation type="journal article" date="2015" name="PLoS ONE">
        <title>Molecular dynamics simulation studies of dTTP binding and catalysis mediated by YhdE dimerization.</title>
        <authorList>
            <person name="Wang N."/>
            <person name="Jiang J."/>
            <person name="Li X."/>
            <person name="Tan H."/>
            <person name="Zheng J."/>
            <person name="Chen G."/>
            <person name="Jia Z."/>
        </authorList>
    </citation>
    <scope>SUBUNIT</scope>
    <scope>MOLECULAR DYNAMICS SIMULATION</scope>
</reference>
<reference key="7">
    <citation type="journal article" date="2017" name="Sci. Rep.">
        <title>A new method to investigate the catalytic mechanism of YhdE pyrophosphatase by using a pyrophosphate fluorescence probe.</title>
        <authorList>
            <person name="Shen Q."/>
            <person name="Tan H."/>
            <person name="Xing G.W."/>
            <person name="Zheng J."/>
            <person name="Jia Z."/>
        </authorList>
    </citation>
    <scope>FUNCTION</scope>
    <scope>CATALYTIC ACTIVITY</scope>
    <scope>MUTAGENESIS OF GLU-33</scope>
</reference>
<reference evidence="11" key="8">
    <citation type="journal article" date="2015" name="PLoS ONE">
        <title>Insights into the cellular function of YhdE, a nucleotide pyrophosphatase from Escherichia coli.</title>
        <authorList>
            <person name="Jin J."/>
            <person name="Wu R."/>
            <person name="Zhu J."/>
            <person name="Yang S."/>
            <person name="Lei Z."/>
            <person name="Wang N."/>
            <person name="Singh V.K."/>
            <person name="Zheng J."/>
            <person name="Jia Z."/>
        </authorList>
    </citation>
    <scope>X-RAY CRYSTALLOGRAPHY (2.30 ANGSTROMS) OF 2-190 OF MUTANT ALA-33</scope>
    <scope>FUNCTION</scope>
    <scope>CATALYTIC ACTIVITY</scope>
    <scope>BIOPHYSICOCHEMICAL PROPERTIES</scope>
    <scope>SUBUNIT</scope>
    <scope>DISRUPTION PHENOTYPE</scope>
    <source>
        <strain>K12 / W3110 / ATCC 27325 / DSM 5911</strain>
    </source>
</reference>
<keyword id="KW-0002">3D-structure</keyword>
<keyword id="KW-0963">Cytoplasm</keyword>
<keyword id="KW-0378">Hydrolase</keyword>
<keyword id="KW-0546">Nucleotide metabolism</keyword>
<keyword id="KW-1185">Reference proteome</keyword>
<name>NTPPA_ECOLI</name>
<organism>
    <name type="scientific">Escherichia coli (strain K12)</name>
    <dbReference type="NCBI Taxonomy" id="83333"/>
    <lineage>
        <taxon>Bacteria</taxon>
        <taxon>Pseudomonadati</taxon>
        <taxon>Pseudomonadota</taxon>
        <taxon>Gammaproteobacteria</taxon>
        <taxon>Enterobacterales</taxon>
        <taxon>Enterobacteriaceae</taxon>
        <taxon>Escherichia</taxon>
    </lineage>
</organism>